<gene>
    <name evidence="1" type="primary">infA</name>
    <name type="ordered locus">PEPE_1396</name>
</gene>
<organism>
    <name type="scientific">Pediococcus pentosaceus (strain ATCC 25745 / CCUG 21536 / LMG 10740 / 183-1w)</name>
    <dbReference type="NCBI Taxonomy" id="278197"/>
    <lineage>
        <taxon>Bacteria</taxon>
        <taxon>Bacillati</taxon>
        <taxon>Bacillota</taxon>
        <taxon>Bacilli</taxon>
        <taxon>Lactobacillales</taxon>
        <taxon>Lactobacillaceae</taxon>
        <taxon>Pediococcus</taxon>
    </lineage>
</organism>
<comment type="function">
    <text evidence="1">One of the essential components for the initiation of protein synthesis. Stabilizes the binding of IF-2 and IF-3 on the 30S subunit to which N-formylmethionyl-tRNA(fMet) subsequently binds. Helps modulate mRNA selection, yielding the 30S pre-initiation complex (PIC). Upon addition of the 50S ribosomal subunit IF-1, IF-2 and IF-3 are released leaving the mature 70S translation initiation complex.</text>
</comment>
<comment type="subunit">
    <text evidence="1">Component of the 30S ribosomal translation pre-initiation complex which assembles on the 30S ribosome in the order IF-2 and IF-3, IF-1 and N-formylmethionyl-tRNA(fMet); mRNA recruitment can occur at any time during PIC assembly.</text>
</comment>
<comment type="subcellular location">
    <subcellularLocation>
        <location evidence="1">Cytoplasm</location>
    </subcellularLocation>
</comment>
<comment type="similarity">
    <text evidence="1">Belongs to the IF-1 family.</text>
</comment>
<name>IF1_PEDPA</name>
<proteinExistence type="inferred from homology"/>
<accession>Q03ED8</accession>
<dbReference type="EMBL" id="CP000422">
    <property type="protein sequence ID" value="ABJ68434.1"/>
    <property type="molecule type" value="Genomic_DNA"/>
</dbReference>
<dbReference type="RefSeq" id="WP_002833349.1">
    <property type="nucleotide sequence ID" value="NC_008525.1"/>
</dbReference>
<dbReference type="SMR" id="Q03ED8"/>
<dbReference type="STRING" id="278197.PEPE_1396"/>
<dbReference type="GeneID" id="33062603"/>
<dbReference type="KEGG" id="ppe:PEPE_1396"/>
<dbReference type="eggNOG" id="COG0361">
    <property type="taxonomic scope" value="Bacteria"/>
</dbReference>
<dbReference type="HOGENOM" id="CLU_151267_1_0_9"/>
<dbReference type="OrthoDB" id="9803250at2"/>
<dbReference type="Proteomes" id="UP000000773">
    <property type="component" value="Chromosome"/>
</dbReference>
<dbReference type="GO" id="GO:0005829">
    <property type="term" value="C:cytosol"/>
    <property type="evidence" value="ECO:0007669"/>
    <property type="project" value="TreeGrafter"/>
</dbReference>
<dbReference type="GO" id="GO:0043022">
    <property type="term" value="F:ribosome binding"/>
    <property type="evidence" value="ECO:0007669"/>
    <property type="project" value="UniProtKB-UniRule"/>
</dbReference>
<dbReference type="GO" id="GO:0019843">
    <property type="term" value="F:rRNA binding"/>
    <property type="evidence" value="ECO:0007669"/>
    <property type="project" value="UniProtKB-UniRule"/>
</dbReference>
<dbReference type="GO" id="GO:0003743">
    <property type="term" value="F:translation initiation factor activity"/>
    <property type="evidence" value="ECO:0007669"/>
    <property type="project" value="UniProtKB-UniRule"/>
</dbReference>
<dbReference type="CDD" id="cd04451">
    <property type="entry name" value="S1_IF1"/>
    <property type="match status" value="1"/>
</dbReference>
<dbReference type="FunFam" id="2.40.50.140:FF:000002">
    <property type="entry name" value="Translation initiation factor IF-1"/>
    <property type="match status" value="1"/>
</dbReference>
<dbReference type="Gene3D" id="2.40.50.140">
    <property type="entry name" value="Nucleic acid-binding proteins"/>
    <property type="match status" value="1"/>
</dbReference>
<dbReference type="HAMAP" id="MF_00075">
    <property type="entry name" value="IF_1"/>
    <property type="match status" value="1"/>
</dbReference>
<dbReference type="InterPro" id="IPR012340">
    <property type="entry name" value="NA-bd_OB-fold"/>
</dbReference>
<dbReference type="InterPro" id="IPR006196">
    <property type="entry name" value="RNA-binding_domain_S1_IF1"/>
</dbReference>
<dbReference type="InterPro" id="IPR003029">
    <property type="entry name" value="S1_domain"/>
</dbReference>
<dbReference type="InterPro" id="IPR004368">
    <property type="entry name" value="TIF_IF1"/>
</dbReference>
<dbReference type="NCBIfam" id="TIGR00008">
    <property type="entry name" value="infA"/>
    <property type="match status" value="1"/>
</dbReference>
<dbReference type="PANTHER" id="PTHR33370">
    <property type="entry name" value="TRANSLATION INITIATION FACTOR IF-1, CHLOROPLASTIC"/>
    <property type="match status" value="1"/>
</dbReference>
<dbReference type="PANTHER" id="PTHR33370:SF1">
    <property type="entry name" value="TRANSLATION INITIATION FACTOR IF-1, CHLOROPLASTIC"/>
    <property type="match status" value="1"/>
</dbReference>
<dbReference type="Pfam" id="PF01176">
    <property type="entry name" value="eIF-1a"/>
    <property type="match status" value="1"/>
</dbReference>
<dbReference type="SMART" id="SM00316">
    <property type="entry name" value="S1"/>
    <property type="match status" value="1"/>
</dbReference>
<dbReference type="SUPFAM" id="SSF50249">
    <property type="entry name" value="Nucleic acid-binding proteins"/>
    <property type="match status" value="1"/>
</dbReference>
<dbReference type="PROSITE" id="PS50832">
    <property type="entry name" value="S1_IF1_TYPE"/>
    <property type="match status" value="1"/>
</dbReference>
<protein>
    <recommendedName>
        <fullName evidence="1">Translation initiation factor IF-1</fullName>
    </recommendedName>
</protein>
<evidence type="ECO:0000255" key="1">
    <source>
        <dbReference type="HAMAP-Rule" id="MF_00075"/>
    </source>
</evidence>
<feature type="chain" id="PRO_0000338879" description="Translation initiation factor IF-1">
    <location>
        <begin position="1"/>
        <end position="72"/>
    </location>
</feature>
<feature type="domain" description="S1-like" evidence="1">
    <location>
        <begin position="1"/>
        <end position="72"/>
    </location>
</feature>
<sequence length="72" mass="8250">MAKDNVIEIEGTVKETMPNAMFKVELENGHEILAHVSGKIRMHYIKILPGDKVTVEMSPYDLSKGRITYRFK</sequence>
<keyword id="KW-0963">Cytoplasm</keyword>
<keyword id="KW-0396">Initiation factor</keyword>
<keyword id="KW-0648">Protein biosynthesis</keyword>
<keyword id="KW-0694">RNA-binding</keyword>
<keyword id="KW-0699">rRNA-binding</keyword>
<reference key="1">
    <citation type="journal article" date="2006" name="Proc. Natl. Acad. Sci. U.S.A.">
        <title>Comparative genomics of the lactic acid bacteria.</title>
        <authorList>
            <person name="Makarova K.S."/>
            <person name="Slesarev A."/>
            <person name="Wolf Y.I."/>
            <person name="Sorokin A."/>
            <person name="Mirkin B."/>
            <person name="Koonin E.V."/>
            <person name="Pavlov A."/>
            <person name="Pavlova N."/>
            <person name="Karamychev V."/>
            <person name="Polouchine N."/>
            <person name="Shakhova V."/>
            <person name="Grigoriev I."/>
            <person name="Lou Y."/>
            <person name="Rohksar D."/>
            <person name="Lucas S."/>
            <person name="Huang K."/>
            <person name="Goodstein D.M."/>
            <person name="Hawkins T."/>
            <person name="Plengvidhya V."/>
            <person name="Welker D."/>
            <person name="Hughes J."/>
            <person name="Goh Y."/>
            <person name="Benson A."/>
            <person name="Baldwin K."/>
            <person name="Lee J.-H."/>
            <person name="Diaz-Muniz I."/>
            <person name="Dosti B."/>
            <person name="Smeianov V."/>
            <person name="Wechter W."/>
            <person name="Barabote R."/>
            <person name="Lorca G."/>
            <person name="Altermann E."/>
            <person name="Barrangou R."/>
            <person name="Ganesan B."/>
            <person name="Xie Y."/>
            <person name="Rawsthorne H."/>
            <person name="Tamir D."/>
            <person name="Parker C."/>
            <person name="Breidt F."/>
            <person name="Broadbent J.R."/>
            <person name="Hutkins R."/>
            <person name="O'Sullivan D."/>
            <person name="Steele J."/>
            <person name="Unlu G."/>
            <person name="Saier M.H. Jr."/>
            <person name="Klaenhammer T."/>
            <person name="Richardson P."/>
            <person name="Kozyavkin S."/>
            <person name="Weimer B.C."/>
            <person name="Mills D.A."/>
        </authorList>
    </citation>
    <scope>NUCLEOTIDE SEQUENCE [LARGE SCALE GENOMIC DNA]</scope>
    <source>
        <strain>ATCC 25745 / CCUG 21536 / LMG 10740 / 183-1w</strain>
    </source>
</reference>